<feature type="chain" id="PRO_0000075631" description="Ribitol-5-phosphate cytidylyltransferase">
    <location>
        <begin position="1"/>
        <end position="235"/>
    </location>
</feature>
<feature type="binding site" evidence="1">
    <location>
        <begin position="7"/>
        <end position="10"/>
    </location>
    <ligand>
        <name>CTP</name>
        <dbReference type="ChEBI" id="CHEBI:37563"/>
    </ligand>
</feature>
<feature type="binding site" evidence="1">
    <location>
        <begin position="82"/>
        <end position="88"/>
    </location>
    <ligand>
        <name>CTP</name>
        <dbReference type="ChEBI" id="CHEBI:37563"/>
    </ligand>
</feature>
<feature type="binding site" evidence="1">
    <location>
        <position position="113"/>
    </location>
    <ligand>
        <name>CTP</name>
        <dbReference type="ChEBI" id="CHEBI:37563"/>
    </ligand>
</feature>
<feature type="site" description="Transition state stabilizer" evidence="1">
    <location>
        <position position="14"/>
    </location>
</feature>
<feature type="site" description="Transition state stabilizer" evidence="1">
    <location>
        <position position="22"/>
    </location>
</feature>
<feature type="site" description="Positions ribitol 5-phosphate for the nucleophilic attack" evidence="1">
    <location>
        <position position="161"/>
    </location>
</feature>
<feature type="site" description="Positions ribitol 5-phosphate for the nucleophilic attack" evidence="1">
    <location>
        <position position="218"/>
    </location>
</feature>
<accession>Q97QE5</accession>
<dbReference type="EC" id="2.7.7.40" evidence="1"/>
<dbReference type="EMBL" id="AE005672">
    <property type="protein sequence ID" value="AAK75375.1"/>
    <property type="molecule type" value="Genomic_DNA"/>
</dbReference>
<dbReference type="PIR" id="F95147">
    <property type="entry name" value="F95147"/>
</dbReference>
<dbReference type="RefSeq" id="WP_000638508.1">
    <property type="nucleotide sequence ID" value="NZ_CP155539.1"/>
</dbReference>
<dbReference type="SMR" id="Q97QE5"/>
<dbReference type="PaxDb" id="170187-SP_1271"/>
<dbReference type="EnsemblBacteria" id="AAK75375">
    <property type="protein sequence ID" value="AAK75375"/>
    <property type="gene ID" value="SP_1271"/>
</dbReference>
<dbReference type="KEGG" id="spn:SP_1271"/>
<dbReference type="eggNOG" id="COG1211">
    <property type="taxonomic scope" value="Bacteria"/>
</dbReference>
<dbReference type="PhylomeDB" id="Q97QE5"/>
<dbReference type="BioCyc" id="SPNE170187:G1FZB-1284-MONOMER"/>
<dbReference type="UniPathway" id="UPA00790"/>
<dbReference type="Proteomes" id="UP000000585">
    <property type="component" value="Chromosome"/>
</dbReference>
<dbReference type="GO" id="GO:0050518">
    <property type="term" value="F:2-C-methyl-D-erythritol 4-phosphate cytidylyltransferase activity"/>
    <property type="evidence" value="ECO:0007669"/>
    <property type="project" value="TreeGrafter"/>
</dbReference>
<dbReference type="GO" id="GO:0047349">
    <property type="term" value="F:D-ribitol-5-phosphate cytidylyltransferase activity"/>
    <property type="evidence" value="ECO:0007669"/>
    <property type="project" value="UniProtKB-UniRule"/>
</dbReference>
<dbReference type="GO" id="GO:0071555">
    <property type="term" value="P:cell wall organization"/>
    <property type="evidence" value="ECO:0007669"/>
    <property type="project" value="UniProtKB-KW"/>
</dbReference>
<dbReference type="GO" id="GO:0008299">
    <property type="term" value="P:isoprenoid biosynthetic process"/>
    <property type="evidence" value="ECO:0007669"/>
    <property type="project" value="InterPro"/>
</dbReference>
<dbReference type="GO" id="GO:1902012">
    <property type="term" value="P:poly(ribitol phosphate) teichoic acid biosynthetic process"/>
    <property type="evidence" value="ECO:0007669"/>
    <property type="project" value="UniProtKB-UniRule"/>
</dbReference>
<dbReference type="CDD" id="cd02516">
    <property type="entry name" value="CDP-ME_synthetase"/>
    <property type="match status" value="1"/>
</dbReference>
<dbReference type="FunFam" id="3.90.550.10:FF:000003">
    <property type="entry name" value="2-C-methyl-D-erythritol 4-phosphate cytidylyltransferase"/>
    <property type="match status" value="1"/>
</dbReference>
<dbReference type="Gene3D" id="3.90.550.10">
    <property type="entry name" value="Spore Coat Polysaccharide Biosynthesis Protein SpsA, Chain A"/>
    <property type="match status" value="1"/>
</dbReference>
<dbReference type="HAMAP" id="MF_02068">
    <property type="entry name" value="TarI"/>
    <property type="match status" value="1"/>
</dbReference>
<dbReference type="InterPro" id="IPR034683">
    <property type="entry name" value="IspD/TarI"/>
</dbReference>
<dbReference type="InterPro" id="IPR050088">
    <property type="entry name" value="IspD/TarI_cytidylyltransf_bact"/>
</dbReference>
<dbReference type="InterPro" id="IPR018294">
    <property type="entry name" value="ISPD_synthase_CS"/>
</dbReference>
<dbReference type="InterPro" id="IPR029044">
    <property type="entry name" value="Nucleotide-diphossugar_trans"/>
</dbReference>
<dbReference type="InterPro" id="IPR034709">
    <property type="entry name" value="TarI"/>
</dbReference>
<dbReference type="NCBIfam" id="NF001183">
    <property type="entry name" value="PRK00155.1-3"/>
    <property type="match status" value="1"/>
</dbReference>
<dbReference type="PANTHER" id="PTHR32125">
    <property type="entry name" value="2-C-METHYL-D-ERYTHRITOL 4-PHOSPHATE CYTIDYLYLTRANSFERASE, CHLOROPLASTIC"/>
    <property type="match status" value="1"/>
</dbReference>
<dbReference type="PANTHER" id="PTHR32125:SF8">
    <property type="entry name" value="RIBITOL-5-PHOSPHATE CYTIDYLYLTRANSFERASE"/>
    <property type="match status" value="1"/>
</dbReference>
<dbReference type="Pfam" id="PF01128">
    <property type="entry name" value="IspD"/>
    <property type="match status" value="1"/>
</dbReference>
<dbReference type="SUPFAM" id="SSF53448">
    <property type="entry name" value="Nucleotide-diphospho-sugar transferases"/>
    <property type="match status" value="1"/>
</dbReference>
<dbReference type="PROSITE" id="PS01295">
    <property type="entry name" value="ISPD"/>
    <property type="match status" value="1"/>
</dbReference>
<organism>
    <name type="scientific">Streptococcus pneumoniae serotype 4 (strain ATCC BAA-334 / TIGR4)</name>
    <dbReference type="NCBI Taxonomy" id="170187"/>
    <lineage>
        <taxon>Bacteria</taxon>
        <taxon>Bacillati</taxon>
        <taxon>Bacillota</taxon>
        <taxon>Bacilli</taxon>
        <taxon>Lactobacillales</taxon>
        <taxon>Streptococcaceae</taxon>
        <taxon>Streptococcus</taxon>
    </lineage>
</organism>
<name>TARI_STRPN</name>
<protein>
    <recommendedName>
        <fullName evidence="1">Ribitol-5-phosphate cytidylyltransferase</fullName>
        <ecNumber evidence="1">2.7.7.40</ecNumber>
    </recommendedName>
</protein>
<comment type="function">
    <text evidence="1">Catalyzes the transfer of the cytidylyl group of CTP to D-ribitol 5-phosphate.</text>
</comment>
<comment type="catalytic activity">
    <reaction evidence="1">
        <text>D-ribitol 5-phosphate + CTP + H(+) = CDP-L-ribitol + diphosphate</text>
        <dbReference type="Rhea" id="RHEA:12456"/>
        <dbReference type="ChEBI" id="CHEBI:15378"/>
        <dbReference type="ChEBI" id="CHEBI:33019"/>
        <dbReference type="ChEBI" id="CHEBI:37563"/>
        <dbReference type="ChEBI" id="CHEBI:57608"/>
        <dbReference type="ChEBI" id="CHEBI:57695"/>
        <dbReference type="EC" id="2.7.7.40"/>
    </reaction>
</comment>
<comment type="pathway">
    <text evidence="1">Cell wall biogenesis; poly(ribitol phosphate) teichoic acid biosynthesis.</text>
</comment>
<comment type="similarity">
    <text evidence="1">Belongs to the IspD/TarI cytidylyltransferase family. TarI subfamily.</text>
</comment>
<keyword id="KW-0961">Cell wall biogenesis/degradation</keyword>
<keyword id="KW-0548">Nucleotidyltransferase</keyword>
<keyword id="KW-1185">Reference proteome</keyword>
<keyword id="KW-0777">Teichoic acid biosynthesis</keyword>
<keyword id="KW-0808">Transferase</keyword>
<gene>
    <name evidence="1" type="primary">tarI</name>
    <name type="ordered locus">SP_1271</name>
</gene>
<evidence type="ECO:0000255" key="1">
    <source>
        <dbReference type="HAMAP-Rule" id="MF_02068"/>
    </source>
</evidence>
<reference key="1">
    <citation type="journal article" date="2001" name="Science">
        <title>Complete genome sequence of a virulent isolate of Streptococcus pneumoniae.</title>
        <authorList>
            <person name="Tettelin H."/>
            <person name="Nelson K.E."/>
            <person name="Paulsen I.T."/>
            <person name="Eisen J.A."/>
            <person name="Read T.D."/>
            <person name="Peterson S.N."/>
            <person name="Heidelberg J.F."/>
            <person name="DeBoy R.T."/>
            <person name="Haft D.H."/>
            <person name="Dodson R.J."/>
            <person name="Durkin A.S."/>
            <person name="Gwinn M.L."/>
            <person name="Kolonay J.F."/>
            <person name="Nelson W.C."/>
            <person name="Peterson J.D."/>
            <person name="Umayam L.A."/>
            <person name="White O."/>
            <person name="Salzberg S.L."/>
            <person name="Lewis M.R."/>
            <person name="Radune D."/>
            <person name="Holtzapple E.K."/>
            <person name="Khouri H.M."/>
            <person name="Wolf A.M."/>
            <person name="Utterback T.R."/>
            <person name="Hansen C.L."/>
            <person name="McDonald L.A."/>
            <person name="Feldblyum T.V."/>
            <person name="Angiuoli S.V."/>
            <person name="Dickinson T."/>
            <person name="Hickey E.K."/>
            <person name="Holt I.E."/>
            <person name="Loftus B.J."/>
            <person name="Yang F."/>
            <person name="Smith H.O."/>
            <person name="Venter J.C."/>
            <person name="Dougherty B.A."/>
            <person name="Morrison D.A."/>
            <person name="Hollingshead S.K."/>
            <person name="Fraser C.M."/>
        </authorList>
    </citation>
    <scope>NUCLEOTIDE SEQUENCE [LARGE SCALE GENOMIC DNA]</scope>
    <source>
        <strain>ATCC BAA-334 / TIGR4</strain>
    </source>
</reference>
<sequence>MIYAGILAGGTGTRMGISNLPKQFLELGDRPILIHTIEKFVLEPSIEKIVVGVHGDWVSHAEDLVDKYLPLYKERIIITKGGADRNTSIKNIIEAIDAYRPLTPEDIVVTHDSVRPFITLRMIQDNIQLAQNHDAVDTVVEAVDTIVESTNGQFITDIPNRAHLYQGQTPQTFRCKDFMDLYGSLSDEEKEILTDACKIFVIKGKDVALAKGEYSNLKITTVTDLKIAKSMIEKD</sequence>
<proteinExistence type="inferred from homology"/>